<accession>Q5X1J2</accession>
<dbReference type="EC" id="2.5.1.75" evidence="1"/>
<dbReference type="EMBL" id="CR628336">
    <property type="protein sequence ID" value="CAH13904.1"/>
    <property type="molecule type" value="Genomic_DNA"/>
</dbReference>
<dbReference type="RefSeq" id="WP_015961760.1">
    <property type="nucleotide sequence ID" value="NC_006368.1"/>
</dbReference>
<dbReference type="SMR" id="Q5X1J2"/>
<dbReference type="KEGG" id="lpp:lpp2751"/>
<dbReference type="LegioList" id="lpp2751"/>
<dbReference type="HOGENOM" id="CLU_032616_0_0_6"/>
<dbReference type="GO" id="GO:0005524">
    <property type="term" value="F:ATP binding"/>
    <property type="evidence" value="ECO:0007669"/>
    <property type="project" value="UniProtKB-UniRule"/>
</dbReference>
<dbReference type="GO" id="GO:0052381">
    <property type="term" value="F:tRNA dimethylallyltransferase activity"/>
    <property type="evidence" value="ECO:0007669"/>
    <property type="project" value="UniProtKB-UniRule"/>
</dbReference>
<dbReference type="GO" id="GO:0006400">
    <property type="term" value="P:tRNA modification"/>
    <property type="evidence" value="ECO:0007669"/>
    <property type="project" value="TreeGrafter"/>
</dbReference>
<dbReference type="FunFam" id="1.10.20.140:FF:000001">
    <property type="entry name" value="tRNA dimethylallyltransferase"/>
    <property type="match status" value="1"/>
</dbReference>
<dbReference type="Gene3D" id="1.10.20.140">
    <property type="match status" value="1"/>
</dbReference>
<dbReference type="Gene3D" id="3.40.50.300">
    <property type="entry name" value="P-loop containing nucleotide triphosphate hydrolases"/>
    <property type="match status" value="1"/>
</dbReference>
<dbReference type="HAMAP" id="MF_00185">
    <property type="entry name" value="IPP_trans"/>
    <property type="match status" value="1"/>
</dbReference>
<dbReference type="InterPro" id="IPR039657">
    <property type="entry name" value="Dimethylallyltransferase"/>
</dbReference>
<dbReference type="InterPro" id="IPR018022">
    <property type="entry name" value="IPT"/>
</dbReference>
<dbReference type="InterPro" id="IPR027417">
    <property type="entry name" value="P-loop_NTPase"/>
</dbReference>
<dbReference type="NCBIfam" id="TIGR00174">
    <property type="entry name" value="miaA"/>
    <property type="match status" value="1"/>
</dbReference>
<dbReference type="PANTHER" id="PTHR11088">
    <property type="entry name" value="TRNA DIMETHYLALLYLTRANSFERASE"/>
    <property type="match status" value="1"/>
</dbReference>
<dbReference type="PANTHER" id="PTHR11088:SF60">
    <property type="entry name" value="TRNA DIMETHYLALLYLTRANSFERASE"/>
    <property type="match status" value="1"/>
</dbReference>
<dbReference type="Pfam" id="PF01715">
    <property type="entry name" value="IPPT"/>
    <property type="match status" value="1"/>
</dbReference>
<dbReference type="SUPFAM" id="SSF52540">
    <property type="entry name" value="P-loop containing nucleoside triphosphate hydrolases"/>
    <property type="match status" value="2"/>
</dbReference>
<keyword id="KW-0067">ATP-binding</keyword>
<keyword id="KW-0460">Magnesium</keyword>
<keyword id="KW-0547">Nucleotide-binding</keyword>
<keyword id="KW-0808">Transferase</keyword>
<keyword id="KW-0819">tRNA processing</keyword>
<organism>
    <name type="scientific">Legionella pneumophila (strain Paris)</name>
    <dbReference type="NCBI Taxonomy" id="297246"/>
    <lineage>
        <taxon>Bacteria</taxon>
        <taxon>Pseudomonadati</taxon>
        <taxon>Pseudomonadota</taxon>
        <taxon>Gammaproteobacteria</taxon>
        <taxon>Legionellales</taxon>
        <taxon>Legionellaceae</taxon>
        <taxon>Legionella</taxon>
    </lineage>
</organism>
<comment type="function">
    <text evidence="1">Catalyzes the transfer of a dimethylallyl group onto the adenine at position 37 in tRNAs that read codons beginning with uridine, leading to the formation of N6-(dimethylallyl)adenosine (i(6)A).</text>
</comment>
<comment type="catalytic activity">
    <reaction evidence="1">
        <text>adenosine(37) in tRNA + dimethylallyl diphosphate = N(6)-dimethylallyladenosine(37) in tRNA + diphosphate</text>
        <dbReference type="Rhea" id="RHEA:26482"/>
        <dbReference type="Rhea" id="RHEA-COMP:10162"/>
        <dbReference type="Rhea" id="RHEA-COMP:10375"/>
        <dbReference type="ChEBI" id="CHEBI:33019"/>
        <dbReference type="ChEBI" id="CHEBI:57623"/>
        <dbReference type="ChEBI" id="CHEBI:74411"/>
        <dbReference type="ChEBI" id="CHEBI:74415"/>
        <dbReference type="EC" id="2.5.1.75"/>
    </reaction>
</comment>
<comment type="cofactor">
    <cofactor evidence="1">
        <name>Mg(2+)</name>
        <dbReference type="ChEBI" id="CHEBI:18420"/>
    </cofactor>
</comment>
<comment type="subunit">
    <text evidence="1">Monomer.</text>
</comment>
<comment type="similarity">
    <text evidence="1">Belongs to the IPP transferase family.</text>
</comment>
<name>MIAA_LEGPA</name>
<protein>
    <recommendedName>
        <fullName evidence="1">tRNA dimethylallyltransferase</fullName>
        <ecNumber evidence="1">2.5.1.75</ecNumber>
    </recommendedName>
    <alternativeName>
        <fullName evidence="1">Dimethylallyl diphosphate:tRNA dimethylallyltransferase</fullName>
        <shortName evidence="1">DMAPP:tRNA dimethylallyltransferase</shortName>
        <shortName evidence="1">DMATase</shortName>
    </alternativeName>
    <alternativeName>
        <fullName evidence="1">Isopentenyl-diphosphate:tRNA isopentenyltransferase</fullName>
        <shortName evidence="1">IPP transferase</shortName>
        <shortName evidence="1">IPPT</shortName>
        <shortName evidence="1">IPTase</shortName>
    </alternativeName>
</protein>
<sequence length="313" mass="35756">MNKLVFCLMGPTASGKTGLACELLTHFPFEIISVDSAMIYRDMNIGTAKPSIHELQRAPHYLIDIKDPVESYSAAQFCTDALSLCAEIIKRGNIPLLVGGTMMYFNALQKGLATLPEADEAVRKRLEEEALSQGWDFLYQKLSQLDPVTAARIHAHDTQRIQRALEVYYLTGSTLSTYLTGPHVQPDYYFVNLALFPEQRSWLHERIAQRFDAMLSEGFIEEVQQLQAKWPIQINLPSMRCVGYRQILEYLAGHYDYETMREKGIAATRQLAKRQLTWLRHWEGALFYDSQNVGFNIDIIAKIREILDNTVSN</sequence>
<evidence type="ECO:0000255" key="1">
    <source>
        <dbReference type="HAMAP-Rule" id="MF_00185"/>
    </source>
</evidence>
<gene>
    <name evidence="1" type="primary">miaA</name>
    <name type="ordered locus">lpp2751</name>
</gene>
<feature type="chain" id="PRO_0000163931" description="tRNA dimethylallyltransferase">
    <location>
        <begin position="1"/>
        <end position="313"/>
    </location>
</feature>
<feature type="region of interest" description="Interaction with substrate tRNA" evidence="1">
    <location>
        <begin position="35"/>
        <end position="38"/>
    </location>
</feature>
<feature type="region of interest" description="Interaction with substrate tRNA" evidence="1">
    <location>
        <begin position="159"/>
        <end position="163"/>
    </location>
</feature>
<feature type="region of interest" description="Interaction with substrate tRNA" evidence="1">
    <location>
        <begin position="240"/>
        <end position="245"/>
    </location>
</feature>
<feature type="binding site" evidence="1">
    <location>
        <begin position="10"/>
        <end position="17"/>
    </location>
    <ligand>
        <name>ATP</name>
        <dbReference type="ChEBI" id="CHEBI:30616"/>
    </ligand>
</feature>
<feature type="binding site" evidence="1">
    <location>
        <begin position="12"/>
        <end position="17"/>
    </location>
    <ligand>
        <name>substrate</name>
    </ligand>
</feature>
<feature type="site" description="Interaction with substrate tRNA" evidence="1">
    <location>
        <position position="101"/>
    </location>
</feature>
<feature type="site" description="Interaction with substrate tRNA" evidence="1">
    <location>
        <position position="123"/>
    </location>
</feature>
<proteinExistence type="inferred from homology"/>
<reference key="1">
    <citation type="journal article" date="2004" name="Nat. Genet.">
        <title>Evidence in the Legionella pneumophila genome for exploitation of host cell functions and high genome plasticity.</title>
        <authorList>
            <person name="Cazalet C."/>
            <person name="Rusniok C."/>
            <person name="Brueggemann H."/>
            <person name="Zidane N."/>
            <person name="Magnier A."/>
            <person name="Ma L."/>
            <person name="Tichit M."/>
            <person name="Jarraud S."/>
            <person name="Bouchier C."/>
            <person name="Vandenesch F."/>
            <person name="Kunst F."/>
            <person name="Etienne J."/>
            <person name="Glaser P."/>
            <person name="Buchrieser C."/>
        </authorList>
    </citation>
    <scope>NUCLEOTIDE SEQUENCE [LARGE SCALE GENOMIC DNA]</scope>
    <source>
        <strain>Paris</strain>
    </source>
</reference>